<reference key="1">
    <citation type="journal article" date="2008" name="Appl. Environ. Microbiol.">
        <title>Genome of the epsilonproteobacterial chemolithoautotroph Sulfurimonas denitrificans.</title>
        <authorList>
            <person name="Sievert S.M."/>
            <person name="Scott K.M."/>
            <person name="Klotz M.G."/>
            <person name="Chain P.S.G."/>
            <person name="Hauser L.J."/>
            <person name="Hemp J."/>
            <person name="Huegler M."/>
            <person name="Land M."/>
            <person name="Lapidus A."/>
            <person name="Larimer F.W."/>
            <person name="Lucas S."/>
            <person name="Malfatti S.A."/>
            <person name="Meyer F."/>
            <person name="Paulsen I.T."/>
            <person name="Ren Q."/>
            <person name="Simon J."/>
            <person name="Bailey K."/>
            <person name="Diaz E."/>
            <person name="Fitzpatrick K.A."/>
            <person name="Glover B."/>
            <person name="Gwatney N."/>
            <person name="Korajkic A."/>
            <person name="Long A."/>
            <person name="Mobberley J.M."/>
            <person name="Pantry S.N."/>
            <person name="Pazder G."/>
            <person name="Peterson S."/>
            <person name="Quintanilla J.D."/>
            <person name="Sprinkle R."/>
            <person name="Stephens J."/>
            <person name="Thomas P."/>
            <person name="Vaughn R."/>
            <person name="Weber M.J."/>
            <person name="Wooten L.L."/>
        </authorList>
    </citation>
    <scope>NUCLEOTIDE SEQUENCE [LARGE SCALE GENOMIC DNA]</scope>
    <source>
        <strain>ATCC 33889 / DSM 1251</strain>
    </source>
</reference>
<keyword id="KW-1185">Reference proteome</keyword>
<keyword id="KW-0687">Ribonucleoprotein</keyword>
<keyword id="KW-0689">Ribosomal protein</keyword>
<evidence type="ECO:0000255" key="1">
    <source>
        <dbReference type="HAMAP-Rule" id="MF_00391"/>
    </source>
</evidence>
<evidence type="ECO:0000256" key="2">
    <source>
        <dbReference type="SAM" id="MobiDB-lite"/>
    </source>
</evidence>
<evidence type="ECO:0000305" key="3"/>
<gene>
    <name evidence="1" type="primary">rpmH</name>
    <name type="ordered locus">Suden_0521</name>
</gene>
<accession>Q30T80</accession>
<feature type="chain" id="PRO_1000013487" description="Large ribosomal subunit protein bL34">
    <location>
        <begin position="1"/>
        <end position="44"/>
    </location>
</feature>
<feature type="region of interest" description="Disordered" evidence="2">
    <location>
        <begin position="1"/>
        <end position="44"/>
    </location>
</feature>
<feature type="compositionally biased region" description="Basic residues" evidence="2">
    <location>
        <begin position="1"/>
        <end position="19"/>
    </location>
</feature>
<feature type="compositionally biased region" description="Basic residues" evidence="2">
    <location>
        <begin position="31"/>
        <end position="44"/>
    </location>
</feature>
<comment type="similarity">
    <text evidence="1">Belongs to the bacterial ribosomal protein bL34 family.</text>
</comment>
<dbReference type="EMBL" id="CP000153">
    <property type="protein sequence ID" value="ABB43801.1"/>
    <property type="molecule type" value="Genomic_DNA"/>
</dbReference>
<dbReference type="RefSeq" id="WP_011372155.1">
    <property type="nucleotide sequence ID" value="NC_007575.1"/>
</dbReference>
<dbReference type="SMR" id="Q30T80"/>
<dbReference type="STRING" id="326298.Suden_0521"/>
<dbReference type="KEGG" id="tdn:Suden_0521"/>
<dbReference type="eggNOG" id="COG0230">
    <property type="taxonomic scope" value="Bacteria"/>
</dbReference>
<dbReference type="HOGENOM" id="CLU_129938_2_0_7"/>
<dbReference type="OrthoDB" id="9804164at2"/>
<dbReference type="Proteomes" id="UP000002714">
    <property type="component" value="Chromosome"/>
</dbReference>
<dbReference type="GO" id="GO:1990904">
    <property type="term" value="C:ribonucleoprotein complex"/>
    <property type="evidence" value="ECO:0007669"/>
    <property type="project" value="UniProtKB-KW"/>
</dbReference>
<dbReference type="GO" id="GO:0005840">
    <property type="term" value="C:ribosome"/>
    <property type="evidence" value="ECO:0007669"/>
    <property type="project" value="UniProtKB-KW"/>
</dbReference>
<dbReference type="GO" id="GO:0003735">
    <property type="term" value="F:structural constituent of ribosome"/>
    <property type="evidence" value="ECO:0007669"/>
    <property type="project" value="InterPro"/>
</dbReference>
<dbReference type="GO" id="GO:0006412">
    <property type="term" value="P:translation"/>
    <property type="evidence" value="ECO:0007669"/>
    <property type="project" value="UniProtKB-UniRule"/>
</dbReference>
<dbReference type="FunFam" id="1.10.287.3980:FF:000001">
    <property type="entry name" value="Mitochondrial ribosomal protein L34"/>
    <property type="match status" value="1"/>
</dbReference>
<dbReference type="Gene3D" id="1.10.287.3980">
    <property type="match status" value="1"/>
</dbReference>
<dbReference type="HAMAP" id="MF_00391">
    <property type="entry name" value="Ribosomal_bL34"/>
    <property type="match status" value="1"/>
</dbReference>
<dbReference type="InterPro" id="IPR000271">
    <property type="entry name" value="Ribosomal_bL34"/>
</dbReference>
<dbReference type="InterPro" id="IPR020939">
    <property type="entry name" value="Ribosomal_bL34_CS"/>
</dbReference>
<dbReference type="NCBIfam" id="TIGR01030">
    <property type="entry name" value="rpmH_bact"/>
    <property type="match status" value="1"/>
</dbReference>
<dbReference type="PANTHER" id="PTHR14503:SF4">
    <property type="entry name" value="LARGE RIBOSOMAL SUBUNIT PROTEIN BL34M"/>
    <property type="match status" value="1"/>
</dbReference>
<dbReference type="PANTHER" id="PTHR14503">
    <property type="entry name" value="MITOCHONDRIAL RIBOSOMAL PROTEIN 34 FAMILY MEMBER"/>
    <property type="match status" value="1"/>
</dbReference>
<dbReference type="Pfam" id="PF00468">
    <property type="entry name" value="Ribosomal_L34"/>
    <property type="match status" value="1"/>
</dbReference>
<dbReference type="PROSITE" id="PS00784">
    <property type="entry name" value="RIBOSOMAL_L34"/>
    <property type="match status" value="1"/>
</dbReference>
<sequence>MKRTYQPHNRPRKSTHGFRARMATKNGRNVINRRRAKGRKKLSV</sequence>
<name>RL34_SULDN</name>
<proteinExistence type="inferred from homology"/>
<protein>
    <recommendedName>
        <fullName evidence="1">Large ribosomal subunit protein bL34</fullName>
    </recommendedName>
    <alternativeName>
        <fullName evidence="3">50S ribosomal protein L34</fullName>
    </alternativeName>
</protein>
<organism>
    <name type="scientific">Sulfurimonas denitrificans (strain ATCC 33889 / DSM 1251)</name>
    <name type="common">Thiomicrospira denitrificans (strain ATCC 33889 / DSM 1251)</name>
    <dbReference type="NCBI Taxonomy" id="326298"/>
    <lineage>
        <taxon>Bacteria</taxon>
        <taxon>Pseudomonadati</taxon>
        <taxon>Campylobacterota</taxon>
        <taxon>Epsilonproteobacteria</taxon>
        <taxon>Campylobacterales</taxon>
        <taxon>Sulfurimonadaceae</taxon>
        <taxon>Sulfurimonas</taxon>
    </lineage>
</organism>